<evidence type="ECO:0000250" key="1"/>
<evidence type="ECO:0000255" key="2"/>
<evidence type="ECO:0000305" key="3"/>
<geneLocation type="mitochondrion"/>
<name>NU5M_ANOAR</name>
<keyword id="KW-0249">Electron transport</keyword>
<keyword id="KW-0472">Membrane</keyword>
<keyword id="KW-0496">Mitochondrion</keyword>
<keyword id="KW-0999">Mitochondrion inner membrane</keyword>
<keyword id="KW-0520">NAD</keyword>
<keyword id="KW-0679">Respiratory chain</keyword>
<keyword id="KW-1278">Translocase</keyword>
<keyword id="KW-0812">Transmembrane</keyword>
<keyword id="KW-1133">Transmembrane helix</keyword>
<keyword id="KW-0813">Transport</keyword>
<keyword id="KW-0830">Ubiquinone</keyword>
<gene>
    <name type="primary">ND5</name>
</gene>
<comment type="function">
    <text evidence="1">Core subunit of the mitochondrial membrane respiratory chain NADH dehydrogenase (Complex I) that is believed to belong to the minimal assembly required for catalysis. Complex I functions in the transfer of electrons from NADH to the respiratory chain. The immediate electron acceptor for the enzyme is believed to be ubiquinone (By similarity).</text>
</comment>
<comment type="catalytic activity">
    <reaction>
        <text>a ubiquinone + NADH + 5 H(+)(in) = a ubiquinol + NAD(+) + 4 H(+)(out)</text>
        <dbReference type="Rhea" id="RHEA:29091"/>
        <dbReference type="Rhea" id="RHEA-COMP:9565"/>
        <dbReference type="Rhea" id="RHEA-COMP:9566"/>
        <dbReference type="ChEBI" id="CHEBI:15378"/>
        <dbReference type="ChEBI" id="CHEBI:16389"/>
        <dbReference type="ChEBI" id="CHEBI:17976"/>
        <dbReference type="ChEBI" id="CHEBI:57540"/>
        <dbReference type="ChEBI" id="CHEBI:57945"/>
        <dbReference type="EC" id="7.1.1.2"/>
    </reaction>
</comment>
<comment type="subcellular location">
    <subcellularLocation>
        <location evidence="1">Mitochondrion inner membrane</location>
        <topology evidence="1">Multi-pass membrane protein</topology>
    </subcellularLocation>
</comment>
<comment type="similarity">
    <text evidence="3">Belongs to the complex I subunit 5 family.</text>
</comment>
<accession>P51899</accession>
<accession>O20867</accession>
<accession>O20868</accession>
<accession>O20869</accession>
<accession>O20872</accession>
<accession>O21815</accession>
<proteinExistence type="inferred from homology"/>
<feature type="chain" id="PRO_0000118053" description="NADH-ubiquinone oxidoreductase chain 5">
    <location>
        <begin position="1"/>
        <end position="384" status="greater than"/>
    </location>
</feature>
<feature type="transmembrane region" description="Helical" evidence="2">
    <location>
        <begin position="12"/>
        <end position="32"/>
    </location>
</feature>
<feature type="transmembrane region" description="Helical" evidence="2">
    <location>
        <begin position="50"/>
        <end position="70"/>
    </location>
</feature>
<feature type="transmembrane region" description="Helical" evidence="2">
    <location>
        <begin position="92"/>
        <end position="112"/>
    </location>
</feature>
<feature type="transmembrane region" description="Helical" evidence="2">
    <location>
        <begin position="113"/>
        <end position="133"/>
    </location>
</feature>
<feature type="transmembrane region" description="Helical" evidence="2">
    <location>
        <begin position="153"/>
        <end position="173"/>
    </location>
</feature>
<feature type="transmembrane region" description="Helical" evidence="2">
    <location>
        <begin position="183"/>
        <end position="203"/>
    </location>
</feature>
<feature type="transmembrane region" description="Helical" evidence="2">
    <location>
        <begin position="215"/>
        <end position="235"/>
    </location>
</feature>
<feature type="transmembrane region" description="Helical" evidence="2">
    <location>
        <begin position="244"/>
        <end position="264"/>
    </location>
</feature>
<feature type="transmembrane region" description="Helical" evidence="2">
    <location>
        <begin position="274"/>
        <end position="293"/>
    </location>
</feature>
<feature type="transmembrane region" description="Helical" evidence="2">
    <location>
        <begin position="298"/>
        <end position="320"/>
    </location>
</feature>
<feature type="transmembrane region" description="Helical" evidence="2">
    <location>
        <begin position="343"/>
        <end position="363"/>
    </location>
</feature>
<feature type="transmembrane region" description="Helical" evidence="2">
    <location>
        <begin position="364"/>
        <end position="384"/>
    </location>
</feature>
<feature type="sequence variant" description="In strain: Arzag.">
    <original>V</original>
    <variation>I</variation>
    <location>
        <position position="5"/>
    </location>
</feature>
<feature type="sequence variant" description="In strain: Arzag.">
    <original>M</original>
    <variation>T</variation>
    <location>
        <position position="32"/>
    </location>
</feature>
<feature type="sequence variant" description="In haplotype 19.">
    <original>G</original>
    <variation>S</variation>
    <location>
        <position position="188"/>
    </location>
</feature>
<feature type="sequence variant" description="In haplotype 10.">
    <original>D</original>
    <variation>N</variation>
    <location>
        <position position="239"/>
    </location>
</feature>
<feature type="sequence variant" description="In haplotype 15.">
    <original>V</original>
    <variation>I</variation>
    <location>
        <position position="253"/>
    </location>
</feature>
<feature type="sequence variant" description="In haplotype 26.">
    <original>VN</original>
    <variation>MK</variation>
    <location>
        <begin position="377"/>
        <end position="378"/>
    </location>
</feature>
<feature type="non-terminal residue">
    <location>
        <position position="384"/>
    </location>
</feature>
<reference key="1">
    <citation type="journal article" date="1994" name="Proc. Natl. Acad. Sci. U.S.A.">
        <title>Molecular phylogeny of the Anopheles gambiae complex suggests genetic introgression between principal malaria vectors.</title>
        <authorList>
            <person name="Besansky N.J."/>
            <person name="Powell J.R."/>
            <person name="Caccone A."/>
            <person name="Hamm D.M."/>
            <person name="Scott J.A."/>
            <person name="Collins F.H."/>
        </authorList>
    </citation>
    <scope>NUCLEOTIDE SEQUENCE [GENOMIC DNA] OF 1-265</scope>
    <source>
        <strain>Arzag</strain>
        <strain>GMAL</strain>
    </source>
</reference>
<reference key="2">
    <citation type="journal article" date="1997" name="Genetics">
        <title>Patterns of mitochondrial variation within and between African malaria vectors, Anopheles gambiae and An. arabiensis, suggest extensive gene flow.</title>
        <authorList>
            <person name="Besansky N.J."/>
            <person name="Lehmann T."/>
            <person name="Fahey G.T."/>
            <person name="Fontenille D."/>
            <person name="Braack L.E.O."/>
            <person name="Hawley W.A."/>
            <person name="Collins F.H."/>
        </authorList>
    </citation>
    <scope>NUCLEOTIDE SEQUENCE [GENOMIC DNA] OF 163-384</scope>
    <scope>VARIANTS</scope>
</reference>
<sequence length="384" mass="43646">MNYLVNYCKISFYFLMSISLSLFLISLKFLLMDLVYFIEWEILSLQSMSIVMTFLFDWMSLMFMSFVLLISSLVIFYSNQYMEEDYNINRFILLVLMFVMSMMMLIISPNLISILLGWDGLGLVSYCLVIYFQNVKSYNAGMLTALSNRIGDVALLLAIAWMLNYGSWNYIFYLDMMKNNIEMMIIGGLVMLAAMTKSAQIPFSSWLPAAMAAPTPVSALVHSSTLVTAGVYLLIRFNDVLMNWWMAQFLLLVSGLTMFMAGLGANFEFDLKKIIALSTLSQLGLMMSILSMGFYKLAFFHLLTHALFKALLFMCAGSIIHNMKNSQDIRMMGSLSMSMPLTCSCFNVANLALCGMPFLAGFYSKDLILEMVMLSYVNVFSFFL</sequence>
<dbReference type="EC" id="7.1.1.2"/>
<dbReference type="EMBL" id="U10124">
    <property type="protein sequence ID" value="AAB51631.1"/>
    <property type="molecule type" value="Genomic_DNA"/>
</dbReference>
<dbReference type="EMBL" id="U10125">
    <property type="protein sequence ID" value="AAB51633.1"/>
    <property type="molecule type" value="Genomic_DNA"/>
</dbReference>
<dbReference type="EMBL" id="AF020965">
    <property type="protein sequence ID" value="AAB81767.1"/>
    <property type="molecule type" value="Genomic_DNA"/>
</dbReference>
<dbReference type="EMBL" id="AF020966">
    <property type="protein sequence ID" value="AAB81768.1"/>
    <property type="molecule type" value="Genomic_DNA"/>
</dbReference>
<dbReference type="EMBL" id="AF020969">
    <property type="protein sequence ID" value="AAB81771.1"/>
    <property type="molecule type" value="Genomic_DNA"/>
</dbReference>
<dbReference type="EMBL" id="AF020972">
    <property type="protein sequence ID" value="AAB81774.1"/>
    <property type="molecule type" value="Genomic_DNA"/>
</dbReference>
<dbReference type="EMBL" id="AF020974">
    <property type="protein sequence ID" value="AAB81776.1"/>
    <property type="molecule type" value="Genomic_DNA"/>
</dbReference>
<dbReference type="EMBL" id="AF020975">
    <property type="protein sequence ID" value="AAB81777.1"/>
    <property type="molecule type" value="Genomic_DNA"/>
</dbReference>
<dbReference type="EMBL" id="AF020976">
    <property type="protein sequence ID" value="AAB81778.1"/>
    <property type="molecule type" value="Genomic_DNA"/>
</dbReference>
<dbReference type="EMBL" id="AF020977">
    <property type="protein sequence ID" value="AAB81779.1"/>
    <property type="molecule type" value="Genomic_DNA"/>
</dbReference>
<dbReference type="EMBL" id="AF020978">
    <property type="protein sequence ID" value="AAB81780.1"/>
    <property type="molecule type" value="Genomic_DNA"/>
</dbReference>
<dbReference type="EMBL" id="AF020979">
    <property type="protein sequence ID" value="AAB81781.1"/>
    <property type="molecule type" value="Genomic_DNA"/>
</dbReference>
<dbReference type="EMBL" id="AF020981">
    <property type="protein sequence ID" value="AAB81783.1"/>
    <property type="molecule type" value="Genomic_DNA"/>
</dbReference>
<dbReference type="EMBL" id="AF020982">
    <property type="protein sequence ID" value="AAB81784.1"/>
    <property type="molecule type" value="Genomic_DNA"/>
</dbReference>
<dbReference type="EMBL" id="AF020983">
    <property type="protein sequence ID" value="AAB81785.1"/>
    <property type="molecule type" value="Genomic_DNA"/>
</dbReference>
<dbReference type="EMBL" id="AF020984">
    <property type="protein sequence ID" value="AAB81786.1"/>
    <property type="molecule type" value="Genomic_DNA"/>
</dbReference>
<dbReference type="EMBL" id="AF020985">
    <property type="protein sequence ID" value="AAB81787.1"/>
    <property type="molecule type" value="Genomic_DNA"/>
</dbReference>
<dbReference type="EMBL" id="AF020986">
    <property type="protein sequence ID" value="AAB81788.1"/>
    <property type="molecule type" value="Genomic_DNA"/>
</dbReference>
<dbReference type="EMBL" id="AF020987">
    <property type="protein sequence ID" value="AAB81789.1"/>
    <property type="molecule type" value="Genomic_DNA"/>
</dbReference>
<dbReference type="EMBL" id="AF020990">
    <property type="protein sequence ID" value="AAB81792.1"/>
    <property type="molecule type" value="Genomic_DNA"/>
</dbReference>
<dbReference type="EMBL" id="AF020994">
    <property type="protein sequence ID" value="AAB81796.1"/>
    <property type="molecule type" value="Genomic_DNA"/>
</dbReference>
<dbReference type="EMBL" id="AF020995">
    <property type="protein sequence ID" value="AAB81797.1"/>
    <property type="molecule type" value="Genomic_DNA"/>
</dbReference>
<dbReference type="EMBL" id="AF020996">
    <property type="protein sequence ID" value="AAB81798.1"/>
    <property type="molecule type" value="Genomic_DNA"/>
</dbReference>
<dbReference type="EMBL" id="AF020997">
    <property type="protein sequence ID" value="AAB81799.1"/>
    <property type="molecule type" value="Genomic_DNA"/>
</dbReference>
<dbReference type="EMBL" id="AF021000">
    <property type="protein sequence ID" value="AAB81802.1"/>
    <property type="molecule type" value="Genomic_DNA"/>
</dbReference>
<dbReference type="EMBL" id="AF021001">
    <property type="protein sequence ID" value="AAB81803.1"/>
    <property type="molecule type" value="Genomic_DNA"/>
</dbReference>
<dbReference type="EMBL" id="AF021004">
    <property type="protein sequence ID" value="AAB81806.1"/>
    <property type="molecule type" value="Genomic_DNA"/>
</dbReference>
<dbReference type="EMBL" id="AF021005">
    <property type="protein sequence ID" value="AAB81807.1"/>
    <property type="molecule type" value="Genomic_DNA"/>
</dbReference>
<dbReference type="EMBL" id="AF021006">
    <property type="protein sequence ID" value="AAB81808.1"/>
    <property type="molecule type" value="Genomic_DNA"/>
</dbReference>
<dbReference type="EMBL" id="AF021007">
    <property type="protein sequence ID" value="AAB81809.1"/>
    <property type="molecule type" value="Genomic_DNA"/>
</dbReference>
<dbReference type="EMBL" id="AF021008">
    <property type="protein sequence ID" value="AAB81810.1"/>
    <property type="molecule type" value="Genomic_DNA"/>
</dbReference>
<dbReference type="EMBL" id="AF021009">
    <property type="protein sequence ID" value="AAB81811.1"/>
    <property type="molecule type" value="Genomic_DNA"/>
</dbReference>
<dbReference type="EMBL" id="AF021010">
    <property type="protein sequence ID" value="AAB81812.1"/>
    <property type="molecule type" value="Genomic_DNA"/>
</dbReference>
<dbReference type="PIR" id="T12176">
    <property type="entry name" value="T12176"/>
</dbReference>
<dbReference type="PIR" id="T12178">
    <property type="entry name" value="T12178"/>
</dbReference>
<dbReference type="PIR" id="T12179">
    <property type="entry name" value="T12179"/>
</dbReference>
<dbReference type="PIR" id="T30246">
    <property type="entry name" value="T30246"/>
</dbReference>
<dbReference type="SMR" id="P51899"/>
<dbReference type="VEuPathDB" id="VectorBase:AARA21_001647"/>
<dbReference type="Proteomes" id="UP000075840">
    <property type="component" value="Unassembled WGS sequence"/>
</dbReference>
<dbReference type="GO" id="GO:0005743">
    <property type="term" value="C:mitochondrial inner membrane"/>
    <property type="evidence" value="ECO:0007669"/>
    <property type="project" value="UniProtKB-SubCell"/>
</dbReference>
<dbReference type="GO" id="GO:0008137">
    <property type="term" value="F:NADH dehydrogenase (ubiquinone) activity"/>
    <property type="evidence" value="ECO:0007669"/>
    <property type="project" value="UniProtKB-EC"/>
</dbReference>
<dbReference type="GO" id="GO:0042773">
    <property type="term" value="P:ATP synthesis coupled electron transport"/>
    <property type="evidence" value="ECO:0007669"/>
    <property type="project" value="InterPro"/>
</dbReference>
<dbReference type="GO" id="GO:0015990">
    <property type="term" value="P:electron transport coupled proton transport"/>
    <property type="evidence" value="ECO:0007669"/>
    <property type="project" value="TreeGrafter"/>
</dbReference>
<dbReference type="InterPro" id="IPR001750">
    <property type="entry name" value="ND/Mrp_TM"/>
</dbReference>
<dbReference type="InterPro" id="IPR003945">
    <property type="entry name" value="NU5C-like"/>
</dbReference>
<dbReference type="InterPro" id="IPR001516">
    <property type="entry name" value="Proton_antipo_N"/>
</dbReference>
<dbReference type="PANTHER" id="PTHR42829">
    <property type="entry name" value="NADH-UBIQUINONE OXIDOREDUCTASE CHAIN 5"/>
    <property type="match status" value="1"/>
</dbReference>
<dbReference type="PANTHER" id="PTHR42829:SF2">
    <property type="entry name" value="NADH-UBIQUINONE OXIDOREDUCTASE CHAIN 5"/>
    <property type="match status" value="1"/>
</dbReference>
<dbReference type="Pfam" id="PF00361">
    <property type="entry name" value="Proton_antipo_M"/>
    <property type="match status" value="1"/>
</dbReference>
<dbReference type="Pfam" id="PF00662">
    <property type="entry name" value="Proton_antipo_N"/>
    <property type="match status" value="1"/>
</dbReference>
<dbReference type="PRINTS" id="PR01434">
    <property type="entry name" value="NADHDHGNASE5"/>
</dbReference>
<organism>
    <name type="scientific">Anopheles arabiensis</name>
    <name type="common">Mosquito</name>
    <dbReference type="NCBI Taxonomy" id="7173"/>
    <lineage>
        <taxon>Eukaryota</taxon>
        <taxon>Metazoa</taxon>
        <taxon>Ecdysozoa</taxon>
        <taxon>Arthropoda</taxon>
        <taxon>Hexapoda</taxon>
        <taxon>Insecta</taxon>
        <taxon>Pterygota</taxon>
        <taxon>Neoptera</taxon>
        <taxon>Endopterygota</taxon>
        <taxon>Diptera</taxon>
        <taxon>Nematocera</taxon>
        <taxon>Culicoidea</taxon>
        <taxon>Culicidae</taxon>
        <taxon>Anophelinae</taxon>
        <taxon>Anopheles</taxon>
    </lineage>
</organism>
<protein>
    <recommendedName>
        <fullName>NADH-ubiquinone oxidoreductase chain 5</fullName>
        <ecNumber>7.1.1.2</ecNumber>
    </recommendedName>
    <alternativeName>
        <fullName>NADH dehydrogenase subunit 5</fullName>
    </alternativeName>
</protein>